<reference key="1">
    <citation type="journal article" date="2007" name="J. Bacteriol.">
        <title>Complete genome of acute rheumatic fever-associated serotype M5 Streptococcus pyogenes strain Manfredo.</title>
        <authorList>
            <person name="Holden M.T.G."/>
            <person name="Scott A."/>
            <person name="Cherevach I."/>
            <person name="Chillingworth T."/>
            <person name="Churcher C."/>
            <person name="Cronin A."/>
            <person name="Dowd L."/>
            <person name="Feltwell T."/>
            <person name="Hamlin N."/>
            <person name="Holroyd S."/>
            <person name="Jagels K."/>
            <person name="Moule S."/>
            <person name="Mungall K."/>
            <person name="Quail M.A."/>
            <person name="Price C."/>
            <person name="Rabbinowitsch E."/>
            <person name="Sharp S."/>
            <person name="Skelton J."/>
            <person name="Whitehead S."/>
            <person name="Barrell B.G."/>
            <person name="Kehoe M."/>
            <person name="Parkhill J."/>
        </authorList>
    </citation>
    <scope>NUCLEOTIDE SEQUENCE [LARGE SCALE GENOMIC DNA]</scope>
    <source>
        <strain>Manfredo</strain>
    </source>
</reference>
<gene>
    <name evidence="1" type="primary">cmk</name>
    <name type="ordered locus">SpyM51189</name>
</gene>
<sequence length="226" mass="25019">MKAIKIAIDGPASSGKSTVAKIIAKNLGYTYLDTGAMYRSATYIALTHGYTDKEVALILEELEKNPISFKKAKDGSQLVFLGDEDVTLAIRQNDVTNNVSWVSALPEIREELVHQQRRIAQAGGIIMDGRDIGTVVLPDAELKIFLVASVEERAERRYKENLEKGIESDFETLKEEIAARDYKDSHRKVSPLKAAEDALIFDTTGVSIDGVVQFIQEKAEKIVDMS</sequence>
<organism>
    <name type="scientific">Streptococcus pyogenes serotype M5 (strain Manfredo)</name>
    <dbReference type="NCBI Taxonomy" id="160491"/>
    <lineage>
        <taxon>Bacteria</taxon>
        <taxon>Bacillati</taxon>
        <taxon>Bacillota</taxon>
        <taxon>Bacilli</taxon>
        <taxon>Lactobacillales</taxon>
        <taxon>Streptococcaceae</taxon>
        <taxon>Streptococcus</taxon>
    </lineage>
</organism>
<evidence type="ECO:0000255" key="1">
    <source>
        <dbReference type="HAMAP-Rule" id="MF_00238"/>
    </source>
</evidence>
<proteinExistence type="inferred from homology"/>
<keyword id="KW-0067">ATP-binding</keyword>
<keyword id="KW-0963">Cytoplasm</keyword>
<keyword id="KW-0418">Kinase</keyword>
<keyword id="KW-0547">Nucleotide-binding</keyword>
<keyword id="KW-0808">Transferase</keyword>
<comment type="catalytic activity">
    <reaction evidence="1">
        <text>CMP + ATP = CDP + ADP</text>
        <dbReference type="Rhea" id="RHEA:11600"/>
        <dbReference type="ChEBI" id="CHEBI:30616"/>
        <dbReference type="ChEBI" id="CHEBI:58069"/>
        <dbReference type="ChEBI" id="CHEBI:60377"/>
        <dbReference type="ChEBI" id="CHEBI:456216"/>
        <dbReference type="EC" id="2.7.4.25"/>
    </reaction>
</comment>
<comment type="catalytic activity">
    <reaction evidence="1">
        <text>dCMP + ATP = dCDP + ADP</text>
        <dbReference type="Rhea" id="RHEA:25094"/>
        <dbReference type="ChEBI" id="CHEBI:30616"/>
        <dbReference type="ChEBI" id="CHEBI:57566"/>
        <dbReference type="ChEBI" id="CHEBI:58593"/>
        <dbReference type="ChEBI" id="CHEBI:456216"/>
        <dbReference type="EC" id="2.7.4.25"/>
    </reaction>
</comment>
<comment type="subcellular location">
    <subcellularLocation>
        <location evidence="1">Cytoplasm</location>
    </subcellularLocation>
</comment>
<comment type="similarity">
    <text evidence="1">Belongs to the cytidylate kinase family. Type 1 subfamily.</text>
</comment>
<protein>
    <recommendedName>
        <fullName evidence="1">Cytidylate kinase</fullName>
        <shortName evidence="1">CK</shortName>
        <ecNumber evidence="1">2.7.4.25</ecNumber>
    </recommendedName>
    <alternativeName>
        <fullName evidence="1">Cytidine monophosphate kinase</fullName>
        <shortName evidence="1">CMP kinase</shortName>
    </alternativeName>
</protein>
<accession>A2RF85</accession>
<feature type="chain" id="PRO_1000048299" description="Cytidylate kinase">
    <location>
        <begin position="1"/>
        <end position="226"/>
    </location>
</feature>
<feature type="binding site" evidence="1">
    <location>
        <begin position="10"/>
        <end position="18"/>
    </location>
    <ligand>
        <name>ATP</name>
        <dbReference type="ChEBI" id="CHEBI:30616"/>
    </ligand>
</feature>
<name>KCY_STRPG</name>
<dbReference type="EC" id="2.7.4.25" evidence="1"/>
<dbReference type="EMBL" id="AM295007">
    <property type="protein sequence ID" value="CAM30514.1"/>
    <property type="molecule type" value="Genomic_DNA"/>
</dbReference>
<dbReference type="RefSeq" id="WP_002985154.1">
    <property type="nucleotide sequence ID" value="NC_009332.1"/>
</dbReference>
<dbReference type="SMR" id="A2RF85"/>
<dbReference type="KEGG" id="spf:SpyM51189"/>
<dbReference type="HOGENOM" id="CLU_079959_0_2_9"/>
<dbReference type="GO" id="GO:0005829">
    <property type="term" value="C:cytosol"/>
    <property type="evidence" value="ECO:0007669"/>
    <property type="project" value="TreeGrafter"/>
</dbReference>
<dbReference type="GO" id="GO:0005524">
    <property type="term" value="F:ATP binding"/>
    <property type="evidence" value="ECO:0007669"/>
    <property type="project" value="UniProtKB-UniRule"/>
</dbReference>
<dbReference type="GO" id="GO:0036430">
    <property type="term" value="F:CMP kinase activity"/>
    <property type="evidence" value="ECO:0007669"/>
    <property type="project" value="RHEA"/>
</dbReference>
<dbReference type="GO" id="GO:0036431">
    <property type="term" value="F:dCMP kinase activity"/>
    <property type="evidence" value="ECO:0007669"/>
    <property type="project" value="RHEA"/>
</dbReference>
<dbReference type="GO" id="GO:0015949">
    <property type="term" value="P:nucleobase-containing small molecule interconversion"/>
    <property type="evidence" value="ECO:0007669"/>
    <property type="project" value="TreeGrafter"/>
</dbReference>
<dbReference type="GO" id="GO:0006220">
    <property type="term" value="P:pyrimidine nucleotide metabolic process"/>
    <property type="evidence" value="ECO:0007669"/>
    <property type="project" value="UniProtKB-UniRule"/>
</dbReference>
<dbReference type="CDD" id="cd02020">
    <property type="entry name" value="CMPK"/>
    <property type="match status" value="1"/>
</dbReference>
<dbReference type="FunFam" id="3.40.50.300:FF:000484">
    <property type="entry name" value="Cytidylate kinase"/>
    <property type="match status" value="1"/>
</dbReference>
<dbReference type="Gene3D" id="3.40.50.300">
    <property type="entry name" value="P-loop containing nucleotide triphosphate hydrolases"/>
    <property type="match status" value="1"/>
</dbReference>
<dbReference type="HAMAP" id="MF_00238">
    <property type="entry name" value="Cytidyl_kinase_type1"/>
    <property type="match status" value="1"/>
</dbReference>
<dbReference type="InterPro" id="IPR003136">
    <property type="entry name" value="Cytidylate_kin"/>
</dbReference>
<dbReference type="InterPro" id="IPR011994">
    <property type="entry name" value="Cytidylate_kinase_dom"/>
</dbReference>
<dbReference type="InterPro" id="IPR027417">
    <property type="entry name" value="P-loop_NTPase"/>
</dbReference>
<dbReference type="NCBIfam" id="TIGR00017">
    <property type="entry name" value="cmk"/>
    <property type="match status" value="1"/>
</dbReference>
<dbReference type="PANTHER" id="PTHR21299:SF2">
    <property type="entry name" value="CYTIDYLATE KINASE"/>
    <property type="match status" value="1"/>
</dbReference>
<dbReference type="PANTHER" id="PTHR21299">
    <property type="entry name" value="CYTIDYLATE KINASE/PANTOATE-BETA-ALANINE LIGASE"/>
    <property type="match status" value="1"/>
</dbReference>
<dbReference type="Pfam" id="PF02224">
    <property type="entry name" value="Cytidylate_kin"/>
    <property type="match status" value="1"/>
</dbReference>
<dbReference type="SUPFAM" id="SSF52540">
    <property type="entry name" value="P-loop containing nucleoside triphosphate hydrolases"/>
    <property type="match status" value="1"/>
</dbReference>